<name>E2F1_DROME</name>
<feature type="chain" id="PRO_0000219474" description="Transcription factor E2f1">
    <location>
        <begin position="1"/>
        <end position="805"/>
    </location>
</feature>
<feature type="DNA-binding region" evidence="1">
    <location>
        <begin position="253"/>
        <end position="318"/>
    </location>
</feature>
<feature type="region of interest" description="Disordered" evidence="2">
    <location>
        <begin position="9"/>
        <end position="45"/>
    </location>
</feature>
<feature type="region of interest" description="Disordered" evidence="2">
    <location>
        <begin position="119"/>
        <end position="208"/>
    </location>
</feature>
<feature type="region of interest" description="Disordered" evidence="2">
    <location>
        <begin position="224"/>
        <end position="255"/>
    </location>
</feature>
<feature type="region of interest" description="Dimerization" evidence="1">
    <location>
        <begin position="318"/>
        <end position="411"/>
    </location>
</feature>
<feature type="region of interest" description="Disordered" evidence="2">
    <location>
        <begin position="578"/>
        <end position="650"/>
    </location>
</feature>
<feature type="region of interest" description="Disordered" evidence="2">
    <location>
        <begin position="714"/>
        <end position="743"/>
    </location>
</feature>
<feature type="short sequence motif" description="PIP-box K+4 motif">
    <location>
        <begin position="147"/>
        <end position="161"/>
    </location>
</feature>
<feature type="compositionally biased region" description="Low complexity" evidence="2">
    <location>
        <begin position="12"/>
        <end position="37"/>
    </location>
</feature>
<feature type="compositionally biased region" description="Low complexity" evidence="2">
    <location>
        <begin position="119"/>
        <end position="134"/>
    </location>
</feature>
<feature type="compositionally biased region" description="Polar residues" evidence="2">
    <location>
        <begin position="144"/>
        <end position="154"/>
    </location>
</feature>
<feature type="compositionally biased region" description="Polar residues" evidence="2">
    <location>
        <begin position="181"/>
        <end position="195"/>
    </location>
</feature>
<feature type="compositionally biased region" description="Low complexity" evidence="2">
    <location>
        <begin position="240"/>
        <end position="249"/>
    </location>
</feature>
<feature type="compositionally biased region" description="Low complexity" evidence="2">
    <location>
        <begin position="595"/>
        <end position="615"/>
    </location>
</feature>
<feature type="compositionally biased region" description="Low complexity" evidence="2">
    <location>
        <begin position="623"/>
        <end position="636"/>
    </location>
</feature>
<feature type="compositionally biased region" description="Polar residues" evidence="2">
    <location>
        <begin position="637"/>
        <end position="647"/>
    </location>
</feature>
<feature type="modified residue" description="Phosphoserine" evidence="4">
    <location>
        <position position="434"/>
    </location>
</feature>
<feature type="mutagenesis site" description="Abolishes interaction with PCNA and subsequent degradation by the proteasome.">
    <original>ITNY</original>
    <variation>ATAA</variation>
    <location>
        <begin position="153"/>
        <end position="156"/>
    </location>
</feature>
<feature type="sequence conflict" description="In Ref. 1; CAA55186 and 2; AAA19003." evidence="9" ref="1 2">
    <original>H</original>
    <variation>Q</variation>
    <location>
        <position position="127"/>
    </location>
</feature>
<organism>
    <name type="scientific">Drosophila melanogaster</name>
    <name type="common">Fruit fly</name>
    <dbReference type="NCBI Taxonomy" id="7227"/>
    <lineage>
        <taxon>Eukaryota</taxon>
        <taxon>Metazoa</taxon>
        <taxon>Ecdysozoa</taxon>
        <taxon>Arthropoda</taxon>
        <taxon>Hexapoda</taxon>
        <taxon>Insecta</taxon>
        <taxon>Pterygota</taxon>
        <taxon>Neoptera</taxon>
        <taxon>Endopterygota</taxon>
        <taxon>Diptera</taxon>
        <taxon>Brachycera</taxon>
        <taxon>Muscomorpha</taxon>
        <taxon>Ephydroidea</taxon>
        <taxon>Drosophilidae</taxon>
        <taxon>Drosophila</taxon>
        <taxon>Sophophora</taxon>
    </lineage>
</organism>
<proteinExistence type="evidence at protein level"/>
<dbReference type="EMBL" id="U10184">
    <property type="protein sequence ID" value="AAA19003.1"/>
    <property type="molecule type" value="mRNA"/>
</dbReference>
<dbReference type="EMBL" id="X78421">
    <property type="protein sequence ID" value="CAA55186.1"/>
    <property type="molecule type" value="mRNA"/>
</dbReference>
<dbReference type="EMBL" id="AB011813">
    <property type="protein sequence ID" value="BAA32746.1"/>
    <property type="molecule type" value="Genomic_DNA"/>
</dbReference>
<dbReference type="EMBL" id="AE014297">
    <property type="protein sequence ID" value="AAF55904.1"/>
    <property type="molecule type" value="Genomic_DNA"/>
</dbReference>
<dbReference type="EMBL" id="AE014297">
    <property type="protein sequence ID" value="AAN13878.1"/>
    <property type="molecule type" value="Genomic_DNA"/>
</dbReference>
<dbReference type="EMBL" id="AE014297">
    <property type="protein sequence ID" value="AAN13879.1"/>
    <property type="molecule type" value="Genomic_DNA"/>
</dbReference>
<dbReference type="EMBL" id="BT016096">
    <property type="protein sequence ID" value="AAV36981.1"/>
    <property type="molecule type" value="mRNA"/>
</dbReference>
<dbReference type="PIR" id="A56199">
    <property type="entry name" value="A56199"/>
</dbReference>
<dbReference type="RefSeq" id="NP_001287455.1">
    <property type="nucleotide sequence ID" value="NM_001300526.1"/>
</dbReference>
<dbReference type="RefSeq" id="NP_524437.2">
    <property type="nucleotide sequence ID" value="NM_079713.3"/>
</dbReference>
<dbReference type="RefSeq" id="NP_732646.1">
    <property type="nucleotide sequence ID" value="NM_169961.3"/>
</dbReference>
<dbReference type="RefSeq" id="NP_732647.1">
    <property type="nucleotide sequence ID" value="NM_169962.3"/>
</dbReference>
<dbReference type="SMR" id="Q27368"/>
<dbReference type="BioGRID" id="67516">
    <property type="interactions" value="73"/>
</dbReference>
<dbReference type="DIP" id="DIP-21076N"/>
<dbReference type="ELM" id="Q27368"/>
<dbReference type="FunCoup" id="Q27368">
    <property type="interactions" value="482"/>
</dbReference>
<dbReference type="IntAct" id="Q27368">
    <property type="interactions" value="15"/>
</dbReference>
<dbReference type="STRING" id="7227.FBpp0311412"/>
<dbReference type="GlyGen" id="Q27368">
    <property type="glycosylation" value="1 site"/>
</dbReference>
<dbReference type="iPTMnet" id="Q27368"/>
<dbReference type="PaxDb" id="7227-FBpp0083516"/>
<dbReference type="EnsemblMetazoa" id="FBtr0084117">
    <property type="protein sequence ID" value="FBpp0083516"/>
    <property type="gene ID" value="FBgn0011766"/>
</dbReference>
<dbReference type="EnsemblMetazoa" id="FBtr0084118">
    <property type="protein sequence ID" value="FBpp0083517"/>
    <property type="gene ID" value="FBgn0011766"/>
</dbReference>
<dbReference type="EnsemblMetazoa" id="FBtr0084119">
    <property type="protein sequence ID" value="FBpp0083518"/>
    <property type="gene ID" value="FBgn0011766"/>
</dbReference>
<dbReference type="EnsemblMetazoa" id="FBtr0346157">
    <property type="protein sequence ID" value="FBpp0311985"/>
    <property type="gene ID" value="FBgn0011766"/>
</dbReference>
<dbReference type="GeneID" id="42550"/>
<dbReference type="KEGG" id="dme:Dmel_CG6376"/>
<dbReference type="UCSC" id="CG6376-RB">
    <property type="organism name" value="d. melanogaster"/>
</dbReference>
<dbReference type="AGR" id="FB:FBgn0011766"/>
<dbReference type="CTD" id="1869"/>
<dbReference type="FlyBase" id="FBgn0011766">
    <property type="gene designation" value="E2f1"/>
</dbReference>
<dbReference type="VEuPathDB" id="VectorBase:FBgn0011766"/>
<dbReference type="eggNOG" id="KOG2577">
    <property type="taxonomic scope" value="Eukaryota"/>
</dbReference>
<dbReference type="GeneTree" id="ENSGT00940000170364"/>
<dbReference type="InParanoid" id="Q27368"/>
<dbReference type="OrthoDB" id="1743261at2759"/>
<dbReference type="PhylomeDB" id="Q27368"/>
<dbReference type="Reactome" id="R-DME-68911">
    <property type="pathway name" value="G2 Phase"/>
</dbReference>
<dbReference type="Reactome" id="R-DME-8953750">
    <property type="pathway name" value="Transcriptional Regulation by E2F6"/>
</dbReference>
<dbReference type="SignaLink" id="Q27368"/>
<dbReference type="BioGRID-ORCS" id="42550">
    <property type="hits" value="1 hit in 3 CRISPR screens"/>
</dbReference>
<dbReference type="ChiTaRS" id="E2f1">
    <property type="organism name" value="fly"/>
</dbReference>
<dbReference type="GenomeRNAi" id="42550"/>
<dbReference type="PRO" id="PR:Q27368"/>
<dbReference type="Proteomes" id="UP000000803">
    <property type="component" value="Chromosome 3R"/>
</dbReference>
<dbReference type="Bgee" id="FBgn0011766">
    <property type="expression patterns" value="Expressed in nurse follicle cell (Drosophila) in ovary and 318 other cell types or tissues"/>
</dbReference>
<dbReference type="ExpressionAtlas" id="Q27368">
    <property type="expression patterns" value="baseline and differential"/>
</dbReference>
<dbReference type="GO" id="GO:0005654">
    <property type="term" value="C:nucleoplasm"/>
    <property type="evidence" value="ECO:0000304"/>
    <property type="project" value="Reactome"/>
</dbReference>
<dbReference type="GO" id="GO:0005634">
    <property type="term" value="C:nucleus"/>
    <property type="evidence" value="ECO:0000314"/>
    <property type="project" value="FlyBase"/>
</dbReference>
<dbReference type="GO" id="GO:0035189">
    <property type="term" value="C:Rb-E2F complex"/>
    <property type="evidence" value="ECO:0000314"/>
    <property type="project" value="FlyBase"/>
</dbReference>
<dbReference type="GO" id="GO:0090575">
    <property type="term" value="C:RNA polymerase II transcription regulator complex"/>
    <property type="evidence" value="ECO:0000318"/>
    <property type="project" value="GO_Central"/>
</dbReference>
<dbReference type="GO" id="GO:0003677">
    <property type="term" value="F:DNA binding"/>
    <property type="evidence" value="ECO:0000314"/>
    <property type="project" value="FlyBase"/>
</dbReference>
<dbReference type="GO" id="GO:0001228">
    <property type="term" value="F:DNA-binding transcription activator activity, RNA polymerase II-specific"/>
    <property type="evidence" value="ECO:0000314"/>
    <property type="project" value="FlyBase"/>
</dbReference>
<dbReference type="GO" id="GO:0003700">
    <property type="term" value="F:DNA-binding transcription factor activity"/>
    <property type="evidence" value="ECO:0000314"/>
    <property type="project" value="FlyBase"/>
</dbReference>
<dbReference type="GO" id="GO:0140297">
    <property type="term" value="F:DNA-binding transcription factor binding"/>
    <property type="evidence" value="ECO:0000353"/>
    <property type="project" value="FlyBase"/>
</dbReference>
<dbReference type="GO" id="GO:0001227">
    <property type="term" value="F:DNA-binding transcription repressor activity, RNA polymerase II-specific"/>
    <property type="evidence" value="ECO:0000314"/>
    <property type="project" value="FlyBase"/>
</dbReference>
<dbReference type="GO" id="GO:0046983">
    <property type="term" value="F:protein dimerization activity"/>
    <property type="evidence" value="ECO:0007669"/>
    <property type="project" value="InterPro"/>
</dbReference>
<dbReference type="GO" id="GO:0000978">
    <property type="term" value="F:RNA polymerase II cis-regulatory region sequence-specific DNA binding"/>
    <property type="evidence" value="ECO:0000318"/>
    <property type="project" value="GO_Central"/>
</dbReference>
<dbReference type="GO" id="GO:0000977">
    <property type="term" value="F:RNA polymerase II transcription regulatory region sequence-specific DNA binding"/>
    <property type="evidence" value="ECO:0000314"/>
    <property type="project" value="FlyBase"/>
</dbReference>
<dbReference type="GO" id="GO:0071480">
    <property type="term" value="P:cellular response to gamma radiation"/>
    <property type="evidence" value="ECO:0000315"/>
    <property type="project" value="FlyBase"/>
</dbReference>
<dbReference type="GO" id="GO:0042023">
    <property type="term" value="P:DNA endoreduplication"/>
    <property type="evidence" value="ECO:0000315"/>
    <property type="project" value="FlyBase"/>
</dbReference>
<dbReference type="GO" id="GO:0007307">
    <property type="term" value="P:eggshell chorion gene amplification"/>
    <property type="evidence" value="ECO:0000304"/>
    <property type="project" value="FlyBase"/>
</dbReference>
<dbReference type="GO" id="GO:0000082">
    <property type="term" value="P:G1/S transition of mitotic cell cycle"/>
    <property type="evidence" value="ECO:0000304"/>
    <property type="project" value="FlyBase"/>
</dbReference>
<dbReference type="GO" id="GO:0035167">
    <property type="term" value="P:larval lymph gland hemopoiesis"/>
    <property type="evidence" value="ECO:0000315"/>
    <property type="project" value="FlyBase"/>
</dbReference>
<dbReference type="GO" id="GO:0000122">
    <property type="term" value="P:negative regulation of transcription by RNA polymerase II"/>
    <property type="evidence" value="ECO:0000314"/>
    <property type="project" value="FlyBase"/>
</dbReference>
<dbReference type="GO" id="GO:0043065">
    <property type="term" value="P:positive regulation of apoptotic process"/>
    <property type="evidence" value="ECO:0000315"/>
    <property type="project" value="FlyBase"/>
</dbReference>
<dbReference type="GO" id="GO:0032877">
    <property type="term" value="P:positive regulation of DNA endoreduplication"/>
    <property type="evidence" value="ECO:0000315"/>
    <property type="project" value="FlyBase"/>
</dbReference>
<dbReference type="GO" id="GO:0010628">
    <property type="term" value="P:positive regulation of gene expression"/>
    <property type="evidence" value="ECO:0000315"/>
    <property type="project" value="FlyBase"/>
</dbReference>
<dbReference type="GO" id="GO:0045850">
    <property type="term" value="P:positive regulation of nurse cell apoptotic process"/>
    <property type="evidence" value="ECO:0000315"/>
    <property type="project" value="FlyBase"/>
</dbReference>
<dbReference type="GO" id="GO:0045944">
    <property type="term" value="P:positive regulation of transcription by RNA polymerase II"/>
    <property type="evidence" value="ECO:0000314"/>
    <property type="project" value="FlyBase"/>
</dbReference>
<dbReference type="GO" id="GO:0051726">
    <property type="term" value="P:regulation of cell cycle"/>
    <property type="evidence" value="ECO:0000315"/>
    <property type="project" value="FlyBase"/>
</dbReference>
<dbReference type="GO" id="GO:1900117">
    <property type="term" value="P:regulation of execution phase of apoptosis"/>
    <property type="evidence" value="ECO:0000315"/>
    <property type="project" value="FlyBase"/>
</dbReference>
<dbReference type="GO" id="GO:0010468">
    <property type="term" value="P:regulation of gene expression"/>
    <property type="evidence" value="ECO:0000315"/>
    <property type="project" value="FlyBase"/>
</dbReference>
<dbReference type="GO" id="GO:0035206">
    <property type="term" value="P:regulation of hemocyte proliferation"/>
    <property type="evidence" value="ECO:0000315"/>
    <property type="project" value="FlyBase"/>
</dbReference>
<dbReference type="GO" id="GO:0006357">
    <property type="term" value="P:regulation of transcription by RNA polymerase II"/>
    <property type="evidence" value="ECO:0000318"/>
    <property type="project" value="GO_Central"/>
</dbReference>
<dbReference type="GO" id="GO:0007419">
    <property type="term" value="P:ventral cord development"/>
    <property type="evidence" value="ECO:0007001"/>
    <property type="project" value="FlyBase"/>
</dbReference>
<dbReference type="CDD" id="cd14660">
    <property type="entry name" value="E2F_DD"/>
    <property type="match status" value="1"/>
</dbReference>
<dbReference type="FunFam" id="1.10.10.10:FF:000008">
    <property type="entry name" value="E2F transcription factor 1"/>
    <property type="match status" value="1"/>
</dbReference>
<dbReference type="Gene3D" id="6.10.250.540">
    <property type="match status" value="1"/>
</dbReference>
<dbReference type="Gene3D" id="1.10.10.10">
    <property type="entry name" value="Winged helix-like DNA-binding domain superfamily/Winged helix DNA-binding domain"/>
    <property type="match status" value="1"/>
</dbReference>
<dbReference type="InterPro" id="IPR015633">
    <property type="entry name" value="E2F"/>
</dbReference>
<dbReference type="InterPro" id="IPR037241">
    <property type="entry name" value="E2F-DP_heterodim"/>
</dbReference>
<dbReference type="InterPro" id="IPR032198">
    <property type="entry name" value="E2F_CC-MB"/>
</dbReference>
<dbReference type="InterPro" id="IPR003316">
    <property type="entry name" value="E2F_WHTH_DNA-bd_dom"/>
</dbReference>
<dbReference type="InterPro" id="IPR036388">
    <property type="entry name" value="WH-like_DNA-bd_sf"/>
</dbReference>
<dbReference type="InterPro" id="IPR036390">
    <property type="entry name" value="WH_DNA-bd_sf"/>
</dbReference>
<dbReference type="PANTHER" id="PTHR12081">
    <property type="entry name" value="TRANSCRIPTION FACTOR E2F"/>
    <property type="match status" value="1"/>
</dbReference>
<dbReference type="PANTHER" id="PTHR12081:SF18">
    <property type="entry name" value="TRANSCRIPTION FACTOR E2F2-RELATED"/>
    <property type="match status" value="1"/>
</dbReference>
<dbReference type="Pfam" id="PF16421">
    <property type="entry name" value="E2F_CC-MB"/>
    <property type="match status" value="1"/>
</dbReference>
<dbReference type="Pfam" id="PF02319">
    <property type="entry name" value="E2F_TDP"/>
    <property type="match status" value="1"/>
</dbReference>
<dbReference type="SMART" id="SM01372">
    <property type="entry name" value="E2F_TDP"/>
    <property type="match status" value="1"/>
</dbReference>
<dbReference type="SUPFAM" id="SSF144074">
    <property type="entry name" value="E2F-DP heterodimerization region"/>
    <property type="match status" value="1"/>
</dbReference>
<dbReference type="SUPFAM" id="SSF46785">
    <property type="entry name" value="Winged helix' DNA-binding domain"/>
    <property type="match status" value="1"/>
</dbReference>
<accession>Q27368</accession>
<accession>O77035</accession>
<accession>Q5U0Z6</accession>
<gene>
    <name evidence="10" type="primary">E2f1</name>
    <name evidence="10" type="synonym">E2f</name>
    <name evidence="10" type="ORF">CG6376</name>
</gene>
<comment type="function">
    <text evidence="3 7 8">Transcriptional activator that binds to E2f sites. Required for wild-type growth in mitotic and polytene tissues, Contributes to the expression of replication genes at the G1-S transition and Cyclin E. Activates cell proliferation in wing imaginal disk, which requires expression of vg.</text>
</comment>
<comment type="subunit">
    <text evidence="5">Heterodimer of E2f and Dp. Cooperates to give sequence-specific DNA binding and optimal trans-activation. Interacts with PCNA.</text>
</comment>
<comment type="interaction">
    <interactant intactId="EBI-108384">
        <id>Q27368</id>
    </interactant>
    <interactant intactId="EBI-163640">
        <id>Q9VT57</id>
        <label>Cdk8</label>
    </interactant>
    <organismsDiffer>false</organismsDiffer>
    <experiments>2</experiments>
</comment>
<comment type="interaction">
    <interactant intactId="EBI-108384">
        <id>Q27368</id>
    </interactant>
    <interactant intactId="EBI-145741">
        <id>Q24472</id>
        <label>Rbf</label>
    </interactant>
    <organismsDiffer>false</organismsDiffer>
    <experiments>3</experiments>
</comment>
<comment type="subcellular location">
    <subcellularLocation>
        <location>Nucleus</location>
    </subcellularLocation>
</comment>
<comment type="tissue specificity">
    <text evidence="6">Segmentally repeated expression throughout early embryos is restricted to the ventral nerve cord in later embryos.</text>
</comment>
<comment type="developmental stage">
    <text evidence="6">Throughout embryonic development.</text>
</comment>
<comment type="domain">
    <text evidence="5">The PIP-box K+4 motif mediates both the interaction with PCNA and the recruitment of the DCX(DTL) complex: while the PIP-box interacts with PCNA, the presence of the K+4 submotif, recruits the DCX(DTL) complex, leading to its ubiquitination.</text>
</comment>
<comment type="PTM">
    <text evidence="5">Ubiquitinated by the DCX(DTL) complex, also named CRL4(CDT2) complex, leading to its degradation during S phase. Ubiquitination by the DCX(DTL) complex is essential for cell cycle control and is PCNA-dependent: interacts with PCNA via its PIP-box, while the presence of the containing the 'K+4' motif in the PIP box, recruit the DCX(DTL) complex, leading to its degradation.</text>
</comment>
<comment type="similarity">
    <text evidence="9">Belongs to the E2F/DP family.</text>
</comment>
<protein>
    <recommendedName>
        <fullName>Transcription factor E2f1</fullName>
    </recommendedName>
    <alternativeName>
        <fullName>dE2F</fullName>
    </alternativeName>
</protein>
<keyword id="KW-0010">Activator</keyword>
<keyword id="KW-0217">Developmental protein</keyword>
<keyword id="KW-0238">DNA-binding</keyword>
<keyword id="KW-0539">Nucleus</keyword>
<keyword id="KW-0597">Phosphoprotein</keyword>
<keyword id="KW-1185">Reference proteome</keyword>
<keyword id="KW-0804">Transcription</keyword>
<keyword id="KW-0805">Transcription regulation</keyword>
<keyword id="KW-0832">Ubl conjugation</keyword>
<reference key="1">
    <citation type="journal article" date="1994" name="Mol. Cell. Biol.">
        <title>Functional properties of a Drosophila homolog of the E2F1 gene.</title>
        <authorList>
            <person name="Ohtani K."/>
            <person name="Nevins J.R."/>
        </authorList>
    </citation>
    <scope>NUCLEOTIDE SEQUENCE [MRNA]</scope>
</reference>
<reference key="2">
    <citation type="journal article" date="1994" name="Proc. Natl. Acad. Sci. U.S.A.">
        <title>DNA-binding and trans-activation properties of Drosophila E2F and DP proteins.</title>
        <authorList>
            <person name="Dynlacht B.D."/>
            <person name="Brook A."/>
            <person name="Dembski M."/>
            <person name="Yenush L."/>
            <person name="Dyson N."/>
        </authorList>
    </citation>
    <scope>NUCLEOTIDE SEQUENCE [MRNA]</scope>
    <source>
        <tissue>Eye imaginal disk</tissue>
    </source>
</reference>
<reference key="3">
    <citation type="journal article" date="1999" name="Mol. Cell. Biol.">
        <title>Specification of regions of DNA replication initiation during embryogenesis in the 65-kilobase DNApolalpha-dE2F locus of Drosophila melanogaster.</title>
        <authorList>
            <person name="Sasaki T."/>
            <person name="Sawado T."/>
            <person name="Yamaguchi M."/>
            <person name="Shinomiya T."/>
        </authorList>
    </citation>
    <scope>NUCLEOTIDE SEQUENCE [GENOMIC DNA]</scope>
    <source>
        <strain>Oregon-R</strain>
    </source>
</reference>
<reference key="4">
    <citation type="journal article" date="2000" name="Science">
        <title>The genome sequence of Drosophila melanogaster.</title>
        <authorList>
            <person name="Adams M.D."/>
            <person name="Celniker S.E."/>
            <person name="Holt R.A."/>
            <person name="Evans C.A."/>
            <person name="Gocayne J.D."/>
            <person name="Amanatides P.G."/>
            <person name="Scherer S.E."/>
            <person name="Li P.W."/>
            <person name="Hoskins R.A."/>
            <person name="Galle R.F."/>
            <person name="George R.A."/>
            <person name="Lewis S.E."/>
            <person name="Richards S."/>
            <person name="Ashburner M."/>
            <person name="Henderson S.N."/>
            <person name="Sutton G.G."/>
            <person name="Wortman J.R."/>
            <person name="Yandell M.D."/>
            <person name="Zhang Q."/>
            <person name="Chen L.X."/>
            <person name="Brandon R.C."/>
            <person name="Rogers Y.-H.C."/>
            <person name="Blazej R.G."/>
            <person name="Champe M."/>
            <person name="Pfeiffer B.D."/>
            <person name="Wan K.H."/>
            <person name="Doyle C."/>
            <person name="Baxter E.G."/>
            <person name="Helt G."/>
            <person name="Nelson C.R."/>
            <person name="Miklos G.L.G."/>
            <person name="Abril J.F."/>
            <person name="Agbayani A."/>
            <person name="An H.-J."/>
            <person name="Andrews-Pfannkoch C."/>
            <person name="Baldwin D."/>
            <person name="Ballew R.M."/>
            <person name="Basu A."/>
            <person name="Baxendale J."/>
            <person name="Bayraktaroglu L."/>
            <person name="Beasley E.M."/>
            <person name="Beeson K.Y."/>
            <person name="Benos P.V."/>
            <person name="Berman B.P."/>
            <person name="Bhandari D."/>
            <person name="Bolshakov S."/>
            <person name="Borkova D."/>
            <person name="Botchan M.R."/>
            <person name="Bouck J."/>
            <person name="Brokstein P."/>
            <person name="Brottier P."/>
            <person name="Burtis K.C."/>
            <person name="Busam D.A."/>
            <person name="Butler H."/>
            <person name="Cadieu E."/>
            <person name="Center A."/>
            <person name="Chandra I."/>
            <person name="Cherry J.M."/>
            <person name="Cawley S."/>
            <person name="Dahlke C."/>
            <person name="Davenport L.B."/>
            <person name="Davies P."/>
            <person name="de Pablos B."/>
            <person name="Delcher A."/>
            <person name="Deng Z."/>
            <person name="Mays A.D."/>
            <person name="Dew I."/>
            <person name="Dietz S.M."/>
            <person name="Dodson K."/>
            <person name="Doup L.E."/>
            <person name="Downes M."/>
            <person name="Dugan-Rocha S."/>
            <person name="Dunkov B.C."/>
            <person name="Dunn P."/>
            <person name="Durbin K.J."/>
            <person name="Evangelista C.C."/>
            <person name="Ferraz C."/>
            <person name="Ferriera S."/>
            <person name="Fleischmann W."/>
            <person name="Fosler C."/>
            <person name="Gabrielian A.E."/>
            <person name="Garg N.S."/>
            <person name="Gelbart W.M."/>
            <person name="Glasser K."/>
            <person name="Glodek A."/>
            <person name="Gong F."/>
            <person name="Gorrell J.H."/>
            <person name="Gu Z."/>
            <person name="Guan P."/>
            <person name="Harris M."/>
            <person name="Harris N.L."/>
            <person name="Harvey D.A."/>
            <person name="Heiman T.J."/>
            <person name="Hernandez J.R."/>
            <person name="Houck J."/>
            <person name="Hostin D."/>
            <person name="Houston K.A."/>
            <person name="Howland T.J."/>
            <person name="Wei M.-H."/>
            <person name="Ibegwam C."/>
            <person name="Jalali M."/>
            <person name="Kalush F."/>
            <person name="Karpen G.H."/>
            <person name="Ke Z."/>
            <person name="Kennison J.A."/>
            <person name="Ketchum K.A."/>
            <person name="Kimmel B.E."/>
            <person name="Kodira C.D."/>
            <person name="Kraft C.L."/>
            <person name="Kravitz S."/>
            <person name="Kulp D."/>
            <person name="Lai Z."/>
            <person name="Lasko P."/>
            <person name="Lei Y."/>
            <person name="Levitsky A.A."/>
            <person name="Li J.H."/>
            <person name="Li Z."/>
            <person name="Liang Y."/>
            <person name="Lin X."/>
            <person name="Liu X."/>
            <person name="Mattei B."/>
            <person name="McIntosh T.C."/>
            <person name="McLeod M.P."/>
            <person name="McPherson D."/>
            <person name="Merkulov G."/>
            <person name="Milshina N.V."/>
            <person name="Mobarry C."/>
            <person name="Morris J."/>
            <person name="Moshrefi A."/>
            <person name="Mount S.M."/>
            <person name="Moy M."/>
            <person name="Murphy B."/>
            <person name="Murphy L."/>
            <person name="Muzny D.M."/>
            <person name="Nelson D.L."/>
            <person name="Nelson D.R."/>
            <person name="Nelson K.A."/>
            <person name="Nixon K."/>
            <person name="Nusskern D.R."/>
            <person name="Pacleb J.M."/>
            <person name="Palazzolo M."/>
            <person name="Pittman G.S."/>
            <person name="Pan S."/>
            <person name="Pollard J."/>
            <person name="Puri V."/>
            <person name="Reese M.G."/>
            <person name="Reinert K."/>
            <person name="Remington K."/>
            <person name="Saunders R.D.C."/>
            <person name="Scheeler F."/>
            <person name="Shen H."/>
            <person name="Shue B.C."/>
            <person name="Siden-Kiamos I."/>
            <person name="Simpson M."/>
            <person name="Skupski M.P."/>
            <person name="Smith T.J."/>
            <person name="Spier E."/>
            <person name="Spradling A.C."/>
            <person name="Stapleton M."/>
            <person name="Strong R."/>
            <person name="Sun E."/>
            <person name="Svirskas R."/>
            <person name="Tector C."/>
            <person name="Turner R."/>
            <person name="Venter E."/>
            <person name="Wang A.H."/>
            <person name="Wang X."/>
            <person name="Wang Z.-Y."/>
            <person name="Wassarman D.A."/>
            <person name="Weinstock G.M."/>
            <person name="Weissenbach J."/>
            <person name="Williams S.M."/>
            <person name="Woodage T."/>
            <person name="Worley K.C."/>
            <person name="Wu D."/>
            <person name="Yang S."/>
            <person name="Yao Q.A."/>
            <person name="Ye J."/>
            <person name="Yeh R.-F."/>
            <person name="Zaveri J.S."/>
            <person name="Zhan M."/>
            <person name="Zhang G."/>
            <person name="Zhao Q."/>
            <person name="Zheng L."/>
            <person name="Zheng X.H."/>
            <person name="Zhong F.N."/>
            <person name="Zhong W."/>
            <person name="Zhou X."/>
            <person name="Zhu S.C."/>
            <person name="Zhu X."/>
            <person name="Smith H.O."/>
            <person name="Gibbs R.A."/>
            <person name="Myers E.W."/>
            <person name="Rubin G.M."/>
            <person name="Venter J.C."/>
        </authorList>
    </citation>
    <scope>NUCLEOTIDE SEQUENCE [LARGE SCALE GENOMIC DNA]</scope>
    <source>
        <strain>Berkeley</strain>
    </source>
</reference>
<reference key="5">
    <citation type="journal article" date="2002" name="Genome Biol.">
        <title>Annotation of the Drosophila melanogaster euchromatic genome: a systematic review.</title>
        <authorList>
            <person name="Misra S."/>
            <person name="Crosby M.A."/>
            <person name="Mungall C.J."/>
            <person name="Matthews B.B."/>
            <person name="Campbell K.S."/>
            <person name="Hradecky P."/>
            <person name="Huang Y."/>
            <person name="Kaminker J.S."/>
            <person name="Millburn G.H."/>
            <person name="Prochnik S.E."/>
            <person name="Smith C.D."/>
            <person name="Tupy J.L."/>
            <person name="Whitfield E.J."/>
            <person name="Bayraktaroglu L."/>
            <person name="Berman B.P."/>
            <person name="Bettencourt B.R."/>
            <person name="Celniker S.E."/>
            <person name="de Grey A.D.N.J."/>
            <person name="Drysdale R.A."/>
            <person name="Harris N.L."/>
            <person name="Richter J."/>
            <person name="Russo S."/>
            <person name="Schroeder A.J."/>
            <person name="Shu S.Q."/>
            <person name="Stapleton M."/>
            <person name="Yamada C."/>
            <person name="Ashburner M."/>
            <person name="Gelbart W.M."/>
            <person name="Rubin G.M."/>
            <person name="Lewis S.E."/>
        </authorList>
    </citation>
    <scope>GENOME REANNOTATION</scope>
    <source>
        <strain>Berkeley</strain>
    </source>
</reference>
<reference key="6">
    <citation type="submission" date="2006-11" db="EMBL/GenBank/DDBJ databases">
        <authorList>
            <person name="Stapleton M."/>
            <person name="Carlson J.W."/>
            <person name="Frise E."/>
            <person name="Kapadia B."/>
            <person name="Park S."/>
            <person name="Wan K.H."/>
            <person name="Yu C."/>
            <person name="Celniker S.E."/>
        </authorList>
    </citation>
    <scope>NUCLEOTIDE SEQUENCE [LARGE SCALE MRNA]</scope>
    <source>
        <strain>Berkeley</strain>
        <tissue>Embryo</tissue>
    </source>
</reference>
<reference key="7">
    <citation type="journal article" date="1995" name="J. Cell Sci.">
        <title>Functional conservation of the cell cycle-regulating transcription factor DRTF1/E2F and its pathway of control in Drosophila melanogaster.</title>
        <authorList>
            <person name="Hao X.F."/>
            <person name="Alphey L."/>
            <person name="Bandara L.R."/>
            <person name="Lam E.W."/>
            <person name="Glover D."/>
            <person name="La Thangue N.B."/>
        </authorList>
    </citation>
    <scope>TISSUE SPECIFICITY</scope>
    <scope>DEVELOPMENTAL STAGE</scope>
</reference>
<reference key="8">
    <citation type="journal article" date="1997" name="Genes Dev.">
        <title>Mutations in Drosophila DP and E2F distinguish G1-S progression from an associated transcriptional program.</title>
        <authorList>
            <person name="Royzman I."/>
            <person name="Whittaker A.J."/>
            <person name="Orr-Weaver T.L."/>
        </authorList>
    </citation>
    <scope>FUNCTION</scope>
</reference>
<reference key="9">
    <citation type="journal article" date="1998" name="Mol. Cell. Biol.">
        <title>Mutations of the Drosophila dDP, dE2F, and cyclin E genes reveal distinct roles for the E2F-DP transcription factor and cyclin E during the G1-S transition.</title>
        <authorList>
            <person name="Duronio R.J."/>
            <person name="Bonnette P.C."/>
            <person name="O'Farrell P.H."/>
        </authorList>
    </citation>
    <scope>FUNCTION</scope>
</reference>
<reference key="10">
    <citation type="journal article" date="2004" name="Cell Death Differ.">
        <title>The Drosophila wing differentiation factor vestigial-scalloped is required for cell proliferation and cell survival at the dorso-ventral boundary of the wing imaginal disc.</title>
        <authorList>
            <person name="Delanoue R."/>
            <person name="Legent K."/>
            <person name="Godefroy N."/>
            <person name="Flagiello D."/>
            <person name="Dutriaux A."/>
            <person name="Vaudin P."/>
            <person name="Becker J.L."/>
            <person name="Silber J."/>
        </authorList>
    </citation>
    <scope>FUNCTION</scope>
</reference>
<reference key="11">
    <citation type="journal article" date="2008" name="Dev. Cell">
        <title>Intrinsic negative cell cycle regulation provided by PIP box- and Cul4Cdt2-mediated destruction of E2f1 during S phase.</title>
        <authorList>
            <person name="Shibutani S.T."/>
            <person name="de la Cruz A.F."/>
            <person name="Tran V."/>
            <person name="Turbyfill W.J. III"/>
            <person name="Reis T."/>
            <person name="Edgar B.A."/>
            <person name="Duronio R.J."/>
        </authorList>
    </citation>
    <scope>UBIQUITINATION</scope>
    <scope>DOMAIN PIP-BOX K+4 MOTIF</scope>
    <scope>INTERACTION WITH PCNA</scope>
    <scope>MUTAGENESIS OF 153-ILE--TYR-157</scope>
</reference>
<reference key="12">
    <citation type="journal article" date="2008" name="J. Proteome Res.">
        <title>Phosphoproteome analysis of Drosophila melanogaster embryos.</title>
        <authorList>
            <person name="Zhai B."/>
            <person name="Villen J."/>
            <person name="Beausoleil S.A."/>
            <person name="Mintseris J."/>
            <person name="Gygi S.P."/>
        </authorList>
    </citation>
    <scope>PHOSPHORYLATION [LARGE SCALE ANALYSIS] AT SER-434</scope>
    <scope>IDENTIFICATION BY MASS SPECTROMETRY</scope>
    <source>
        <tissue>Embryo</tissue>
    </source>
</reference>
<evidence type="ECO:0000255" key="1"/>
<evidence type="ECO:0000256" key="2">
    <source>
        <dbReference type="SAM" id="MobiDB-lite"/>
    </source>
</evidence>
<evidence type="ECO:0000269" key="3">
    <source>
    </source>
</evidence>
<evidence type="ECO:0000269" key="4">
    <source>
    </source>
</evidence>
<evidence type="ECO:0000269" key="5">
    <source>
    </source>
</evidence>
<evidence type="ECO:0000269" key="6">
    <source>
    </source>
</evidence>
<evidence type="ECO:0000269" key="7">
    <source>
    </source>
</evidence>
<evidence type="ECO:0000269" key="8">
    <source>
    </source>
</evidence>
<evidence type="ECO:0000305" key="9"/>
<evidence type="ECO:0000312" key="10">
    <source>
        <dbReference type="FlyBase" id="FBgn0011766"/>
    </source>
</evidence>
<sequence>MSKFFVNVAPINNSNSSSSHTTTSSNTQRHQQHQQHYGGSGTTGHTMVARRLNYDLHGGTTSINNNNNIVIKNESVDLDYDHVLSSSDSNSNGGVAAHLRDHVYISLDKGHNTGAVATAAAAATAGHTQQQLQQQHHHQNQQQRKATGKSNDITNYYKVKRRPHAVSDEIHPKKQAKQSAHHQTVYQKHTASSAPQQLRHSHHQLRHDADAELDEDVVERVAKPASHHPFSLSTPQQQLAASVASSSSSGDRNRADTSLGILTKKFVDLLQESPDGVVDLNEASNRLHVQKRRIYDITNVLEGINILEKKSKNNIQWRCGQSMVSQERSRHIEADSLRLEQQENELNKAIDLMRENLAEISQEVENSGGMAYVTQNDLLNVDLFKDQIVIVIKAPPEAKLVLPNTKLPREIYVKAENSGEINVFLCHDTSPENSPIAPGAGYVGAPGAGCVRTATSTRLHPLTNQRLNDPLFNNIDAMSTKGLFQTPYRSARNLSKSIEEAAKQSQPEYNNICDIAMGQHHNLNQQQQQQQQQLLQQPEEDDVDVELNQLVPTLTNPVVRTHQFQQHQQPSIQELFSSLTESSPPTPTKRRREAAAAAIAAGSSTTATTTLNSHNNRNHSNHSNHSNHSSSNNSKSQPPTIGYGSSQRRSDVPMYNCAMEGATTTSATADTTAATSRSAAASSLQMQFAAVAESNNGSSSGGGGGGGGYGSIAGAGANADPHQPYSHDRNSLPPGVADCDANSNSSSVTLQGLDALFNDIGSDYFSNDIAFVSINPPDDNDYPYALNANEGIDRLFDFGSDAYGP</sequence>